<reference key="1">
    <citation type="journal article" date="1995" name="Science">
        <title>Whole-genome random sequencing and assembly of Haemophilus influenzae Rd.</title>
        <authorList>
            <person name="Fleischmann R.D."/>
            <person name="Adams M.D."/>
            <person name="White O."/>
            <person name="Clayton R.A."/>
            <person name="Kirkness E.F."/>
            <person name="Kerlavage A.R."/>
            <person name="Bult C.J."/>
            <person name="Tomb J.-F."/>
            <person name="Dougherty B.A."/>
            <person name="Merrick J.M."/>
            <person name="McKenney K."/>
            <person name="Sutton G.G."/>
            <person name="FitzHugh W."/>
            <person name="Fields C.A."/>
            <person name="Gocayne J.D."/>
            <person name="Scott J.D."/>
            <person name="Shirley R."/>
            <person name="Liu L.-I."/>
            <person name="Glodek A."/>
            <person name="Kelley J.M."/>
            <person name="Weidman J.F."/>
            <person name="Phillips C.A."/>
            <person name="Spriggs T."/>
            <person name="Hedblom E."/>
            <person name="Cotton M.D."/>
            <person name="Utterback T.R."/>
            <person name="Hanna M.C."/>
            <person name="Nguyen D.T."/>
            <person name="Saudek D.M."/>
            <person name="Brandon R.C."/>
            <person name="Fine L.D."/>
            <person name="Fritchman J.L."/>
            <person name="Fuhrmann J.L."/>
            <person name="Geoghagen N.S.M."/>
            <person name="Gnehm C.L."/>
            <person name="McDonald L.A."/>
            <person name="Small K.V."/>
            <person name="Fraser C.M."/>
            <person name="Smith H.O."/>
            <person name="Venter J.C."/>
        </authorList>
    </citation>
    <scope>NUCLEOTIDE SEQUENCE [LARGE SCALE GENOMIC DNA]</scope>
    <source>
        <strain>ATCC 51907 / DSM 11121 / KW20 / Rd</strain>
    </source>
</reference>
<reference key="2">
    <citation type="submission" date="1996-09" db="EMBL/GenBank/DDBJ databases">
        <authorList>
            <person name="White O."/>
            <person name="Clayton R.A."/>
            <person name="Kerlavage A.R."/>
            <person name="Fleischmann R.D."/>
        </authorList>
    </citation>
    <scope>NUCLEOTIDE SEQUENCE [GENOMIC DNA]</scope>
    <scope>SEQUENCE REVISION</scope>
</reference>
<accession>P45018</accession>
<accession>P44108</accession>
<accession>P44109</accession>
<accession>P71368</accession>
<gene>
    <name type="primary">hrpA</name>
    <name type="ordered locus">HI_1070</name>
</gene>
<comment type="catalytic activity">
    <reaction>
        <text>ATP + H2O = ADP + phosphate + H(+)</text>
        <dbReference type="Rhea" id="RHEA:13065"/>
        <dbReference type="ChEBI" id="CHEBI:15377"/>
        <dbReference type="ChEBI" id="CHEBI:15378"/>
        <dbReference type="ChEBI" id="CHEBI:30616"/>
        <dbReference type="ChEBI" id="CHEBI:43474"/>
        <dbReference type="ChEBI" id="CHEBI:456216"/>
        <dbReference type="EC" id="3.6.4.13"/>
    </reaction>
</comment>
<comment type="similarity">
    <text evidence="3">Belongs to the DEAD box helicase family. DEAH subfamily.</text>
</comment>
<keyword id="KW-0067">ATP-binding</keyword>
<keyword id="KW-0347">Helicase</keyword>
<keyword id="KW-0378">Hydrolase</keyword>
<keyword id="KW-0547">Nucleotide-binding</keyword>
<keyword id="KW-1185">Reference proteome</keyword>
<evidence type="ECO:0000255" key="1">
    <source>
        <dbReference type="PROSITE-ProRule" id="PRU00541"/>
    </source>
</evidence>
<evidence type="ECO:0000255" key="2">
    <source>
        <dbReference type="PROSITE-ProRule" id="PRU00542"/>
    </source>
</evidence>
<evidence type="ECO:0000305" key="3"/>
<dbReference type="EC" id="3.6.4.13"/>
<dbReference type="EMBL" id="L42023">
    <property type="protein sequence ID" value="AAC22728.1"/>
    <property type="molecule type" value="Genomic_DNA"/>
</dbReference>
<dbReference type="PIR" id="G64165">
    <property type="entry name" value="G64165"/>
</dbReference>
<dbReference type="PIR" id="I64019">
    <property type="entry name" value="I64019"/>
</dbReference>
<dbReference type="RefSeq" id="NP_439228.2">
    <property type="nucleotide sequence ID" value="NC_000907.1"/>
</dbReference>
<dbReference type="SMR" id="P45018"/>
<dbReference type="STRING" id="71421.HI_1070"/>
<dbReference type="EnsemblBacteria" id="AAC22728">
    <property type="protein sequence ID" value="AAC22728"/>
    <property type="gene ID" value="HI_1070"/>
</dbReference>
<dbReference type="KEGG" id="hin:HI_1070"/>
<dbReference type="PATRIC" id="fig|71421.8.peg.1114"/>
<dbReference type="eggNOG" id="COG1643">
    <property type="taxonomic scope" value="Bacteria"/>
</dbReference>
<dbReference type="HOGENOM" id="CLU_001832_3_3_6"/>
<dbReference type="OrthoDB" id="9805617at2"/>
<dbReference type="PhylomeDB" id="P45018"/>
<dbReference type="Proteomes" id="UP000000579">
    <property type="component" value="Chromosome"/>
</dbReference>
<dbReference type="GO" id="GO:0005524">
    <property type="term" value="F:ATP binding"/>
    <property type="evidence" value="ECO:0007669"/>
    <property type="project" value="UniProtKB-KW"/>
</dbReference>
<dbReference type="GO" id="GO:0016887">
    <property type="term" value="F:ATP hydrolysis activity"/>
    <property type="evidence" value="ECO:0007669"/>
    <property type="project" value="InterPro"/>
</dbReference>
<dbReference type="GO" id="GO:0004386">
    <property type="term" value="F:helicase activity"/>
    <property type="evidence" value="ECO:0000318"/>
    <property type="project" value="GO_Central"/>
</dbReference>
<dbReference type="GO" id="GO:0003723">
    <property type="term" value="F:RNA binding"/>
    <property type="evidence" value="ECO:0000318"/>
    <property type="project" value="GO_Central"/>
</dbReference>
<dbReference type="GO" id="GO:0003724">
    <property type="term" value="F:RNA helicase activity"/>
    <property type="evidence" value="ECO:0007669"/>
    <property type="project" value="UniProtKB-EC"/>
</dbReference>
<dbReference type="CDD" id="cd17989">
    <property type="entry name" value="DEXHc_HrpA"/>
    <property type="match status" value="1"/>
</dbReference>
<dbReference type="CDD" id="cd18791">
    <property type="entry name" value="SF2_C_RHA"/>
    <property type="match status" value="1"/>
</dbReference>
<dbReference type="FunFam" id="1.20.120.1080:FF:000005">
    <property type="entry name" value="ATP-dependent helicase HrpA"/>
    <property type="match status" value="1"/>
</dbReference>
<dbReference type="FunFam" id="3.40.50.300:FF:000575">
    <property type="entry name" value="ATP-dependent helicase hrpA"/>
    <property type="match status" value="1"/>
</dbReference>
<dbReference type="FunFam" id="3.40.50.300:FF:000439">
    <property type="entry name" value="ATP-dependent RNA helicase HrpA"/>
    <property type="match status" value="1"/>
</dbReference>
<dbReference type="Gene3D" id="1.20.120.1080">
    <property type="match status" value="1"/>
</dbReference>
<dbReference type="Gene3D" id="3.40.50.300">
    <property type="entry name" value="P-loop containing nucleotide triphosphate hydrolases"/>
    <property type="match status" value="2"/>
</dbReference>
<dbReference type="InterPro" id="IPR003593">
    <property type="entry name" value="AAA+_ATPase"/>
</dbReference>
<dbReference type="InterPro" id="IPR011709">
    <property type="entry name" value="DEAD-box_helicase_OB_fold"/>
</dbReference>
<dbReference type="InterPro" id="IPR011545">
    <property type="entry name" value="DEAD/DEAH_box_helicase_dom"/>
</dbReference>
<dbReference type="InterPro" id="IPR002464">
    <property type="entry name" value="DNA/RNA_helicase_DEAH_CS"/>
</dbReference>
<dbReference type="InterPro" id="IPR007502">
    <property type="entry name" value="Helicase-assoc_dom"/>
</dbReference>
<dbReference type="InterPro" id="IPR014001">
    <property type="entry name" value="Helicase_ATP-bd"/>
</dbReference>
<dbReference type="InterPro" id="IPR001650">
    <property type="entry name" value="Helicase_C-like"/>
</dbReference>
<dbReference type="InterPro" id="IPR024590">
    <property type="entry name" value="HrpA_C"/>
</dbReference>
<dbReference type="InterPro" id="IPR027417">
    <property type="entry name" value="P-loop_NTPase"/>
</dbReference>
<dbReference type="InterPro" id="IPR010222">
    <property type="entry name" value="RNA_helicase_HrpA"/>
</dbReference>
<dbReference type="NCBIfam" id="TIGR01967">
    <property type="entry name" value="DEAH_box_HrpA"/>
    <property type="match status" value="1"/>
</dbReference>
<dbReference type="NCBIfam" id="NF008348">
    <property type="entry name" value="PRK11131.1"/>
    <property type="match status" value="1"/>
</dbReference>
<dbReference type="PANTHER" id="PTHR18934">
    <property type="entry name" value="ATP-DEPENDENT RNA HELICASE"/>
    <property type="match status" value="1"/>
</dbReference>
<dbReference type="PANTHER" id="PTHR18934:SF99">
    <property type="entry name" value="ATP-DEPENDENT RNA HELICASE DHX37-RELATED"/>
    <property type="match status" value="1"/>
</dbReference>
<dbReference type="Pfam" id="PF00270">
    <property type="entry name" value="DEAD"/>
    <property type="match status" value="1"/>
</dbReference>
<dbReference type="Pfam" id="PF11898">
    <property type="entry name" value="DUF3418"/>
    <property type="match status" value="1"/>
</dbReference>
<dbReference type="Pfam" id="PF21010">
    <property type="entry name" value="HA2_C"/>
    <property type="match status" value="1"/>
</dbReference>
<dbReference type="Pfam" id="PF00271">
    <property type="entry name" value="Helicase_C"/>
    <property type="match status" value="1"/>
</dbReference>
<dbReference type="Pfam" id="PF07717">
    <property type="entry name" value="OB_NTP_bind"/>
    <property type="match status" value="1"/>
</dbReference>
<dbReference type="SMART" id="SM00382">
    <property type="entry name" value="AAA"/>
    <property type="match status" value="1"/>
</dbReference>
<dbReference type="SMART" id="SM00487">
    <property type="entry name" value="DEXDc"/>
    <property type="match status" value="1"/>
</dbReference>
<dbReference type="SMART" id="SM00847">
    <property type="entry name" value="HA2"/>
    <property type="match status" value="1"/>
</dbReference>
<dbReference type="SMART" id="SM00490">
    <property type="entry name" value="HELICc"/>
    <property type="match status" value="1"/>
</dbReference>
<dbReference type="SUPFAM" id="SSF52540">
    <property type="entry name" value="P-loop containing nucleoside triphosphate hydrolases"/>
    <property type="match status" value="1"/>
</dbReference>
<dbReference type="PROSITE" id="PS00690">
    <property type="entry name" value="DEAH_ATP_HELICASE"/>
    <property type="match status" value="1"/>
</dbReference>
<dbReference type="PROSITE" id="PS51192">
    <property type="entry name" value="HELICASE_ATP_BIND_1"/>
    <property type="match status" value="1"/>
</dbReference>
<dbReference type="PROSITE" id="PS51194">
    <property type="entry name" value="HELICASE_CTER"/>
    <property type="match status" value="1"/>
</dbReference>
<protein>
    <recommendedName>
        <fullName>ATP-dependent RNA helicase HrpA homolog</fullName>
        <ecNumber>3.6.4.13</ecNumber>
    </recommendedName>
</protein>
<organism>
    <name type="scientific">Haemophilus influenzae (strain ATCC 51907 / DSM 11121 / KW20 / Rd)</name>
    <dbReference type="NCBI Taxonomy" id="71421"/>
    <lineage>
        <taxon>Bacteria</taxon>
        <taxon>Pseudomonadati</taxon>
        <taxon>Pseudomonadota</taxon>
        <taxon>Gammaproteobacteria</taxon>
        <taxon>Pasteurellales</taxon>
        <taxon>Pasteurellaceae</taxon>
        <taxon>Haemophilus</taxon>
    </lineage>
</organism>
<feature type="chain" id="PRO_0000055179" description="ATP-dependent RNA helicase HrpA homolog">
    <location>
        <begin position="1"/>
        <end position="1304"/>
    </location>
</feature>
<feature type="domain" description="Helicase ATP-binding" evidence="1">
    <location>
        <begin position="93"/>
        <end position="257"/>
    </location>
</feature>
<feature type="domain" description="Helicase C-terminal" evidence="2">
    <location>
        <begin position="281"/>
        <end position="448"/>
    </location>
</feature>
<feature type="short sequence motif" description="DEAH box">
    <location>
        <begin position="203"/>
        <end position="206"/>
    </location>
</feature>
<feature type="binding site" evidence="1">
    <location>
        <begin position="106"/>
        <end position="113"/>
    </location>
    <ligand>
        <name>ATP</name>
        <dbReference type="ChEBI" id="CHEBI:30616"/>
    </ligand>
</feature>
<sequence length="1304" mass="149626">MKNSSVKHTLTPLQQSLFSQLNDIMLVDQRRLSARIHGIGKIKSQEAQQAVAAEIQQQIEQARLRVEQRKSAVQNPIVFPESLPVSQRKVEIQKLISEHQVIVVAGETGSGKTTQLPKMCLELGFGNLGMIGHTQPRRIAARSVAARIAEELETELGGLVGYKVRFNDQISDNTQIKLMTDGILLAEIQNDRFLNQYSCLIIDEAHERSLNNDFILGYLKQLLPRRRRDLKLIITSATIDVERFSKHFNNAPIIEVSGRTYPVEVRYRPVVEEDDQDQLQGILNAVDELQAEGRGDILIFMNGEREIRDTAEALQKQNLKHTEILPLFARLSAQEQNKIFHPSGLNRIVLATNVAETSLTVPSIKYVIDPGTARISRYSYRTKVQRLPIEPISQASANQRKGRCGRVSEGICIRLYSEEDFNSRPEFTDPEILRTNLASVILQMTALGLDDIEAFPFVDAPDERHIQDGVKLLEELGAFETVQTKSGEKRLLTRVGRQLAQLPVDPRLAKMILSAVNFGCVYEMMIIVSALSIQDPRERPQEKQQASDEKHRRFADKKSDFLAFLNLWRYLQEQQKESSKNQFRRQCQKDFLNYLRIREWQDIYHQIRLTVREMSLPINSEKAEYQQIHTALLSGLLSHIGLKEAEKQQYLGARNAHFAIFPNSVLFKKQPKWVMAAELVETSKLWGRMVAEIEPEWIEPLAEHLIKKSYSVPLWSKSRGAVIADEKVTLYGVPIVAVRPVNYGAIDPTVSREIFIQSALVEGGWNTKHKFFKENQRLVREVEELEHKSRRRDILVDDRTLFEFYDQRIGTEVVSQKHFDTWWKKAQQKDPELLNFEHSFLINDDAEQVSKLDFPNFWHQGNLKLKLTYQFEPGTDADGVTVHIPLPLLNQVEMTGFDWQIPGLREELVIALIKSLPKSYRRNFVPAPNYAQAFLSRAVPLEKPLLDTLIYELRRMTGVTVEAEHWNWEQIPSHLKMTFRVVDENGKKIAESMNLDELKFNLKDRVQESISAVADDGIEQSGLHIWSFADLPQCYEQKQRGFSVKAFPAIVDEKDAVGIKLFETEFEQSVAMQQGLRRLLLLNVPSPIKYLHEKLPNKAKLGLYFTPFGRVLDLIDDCIACAVDKLIADFGGFVWDEAGFEKLRDFVRENLNEVTVDIAQKVEQILTLTYQLNQRLKGKMDFTMAFALSDIKSQLAGLVYQGFVQKSGYDRLPDLQRYLQAVDKRIDKLAQDVNRDRAAMLRVEQVQQAYQQLLAKLPKSKPISDEVAEIRYMIEELRVSLFAQQLGTKYQISDKRIGNIISQY</sequence>
<proteinExistence type="inferred from homology"/>
<name>HRPA_HAEIN</name>